<comment type="function">
    <text evidence="1">Channel that opens in response to stretch forces in the membrane lipid bilayer. May participate in the regulation of osmotic pressure changes within the cell.</text>
</comment>
<comment type="subunit">
    <text evidence="1">Homopentamer.</text>
</comment>
<comment type="subcellular location">
    <subcellularLocation>
        <location evidence="1">Cell membrane</location>
        <topology evidence="1">Multi-pass membrane protein</topology>
    </subcellularLocation>
</comment>
<comment type="similarity">
    <text evidence="1 3">Belongs to the MscL family.</text>
</comment>
<feature type="chain" id="PRO_0000427799" description="Large-conductance mechanosensitive channel">
    <location>
        <begin position="1"/>
        <end position="151"/>
    </location>
</feature>
<feature type="transmembrane region" description="Helical" evidence="1">
    <location>
        <begin position="12"/>
        <end position="32"/>
    </location>
</feature>
<feature type="transmembrane region" description="Helical" evidence="1">
    <location>
        <begin position="71"/>
        <end position="91"/>
    </location>
</feature>
<feature type="region of interest" description="Disordered" evidence="2">
    <location>
        <begin position="122"/>
        <end position="151"/>
    </location>
</feature>
<sequence length="151" mass="16023">MLKGFKEFLARGNIVDLAVAVVIGTAFTALVTKFTDSIITPLINRIGVNAQSDVGILRIGIGGGQTIDLNVLLSAAINFFLIAFAVYFLVVLPYNTLRKKGEVEQPGDTQVVLLTEIRDLLAQTNGDSPGRHGGRGTPSPTDGPRASTESQ</sequence>
<proteinExistence type="inferred from homology"/>
<reference key="1">
    <citation type="journal article" date="2002" name="J. Bacteriol.">
        <title>Whole-genome comparison of Mycobacterium tuberculosis clinical and laboratory strains.</title>
        <authorList>
            <person name="Fleischmann R.D."/>
            <person name="Alland D."/>
            <person name="Eisen J.A."/>
            <person name="Carpenter L."/>
            <person name="White O."/>
            <person name="Peterson J.D."/>
            <person name="DeBoy R.T."/>
            <person name="Dodson R.J."/>
            <person name="Gwinn M.L."/>
            <person name="Haft D.H."/>
            <person name="Hickey E.K."/>
            <person name="Kolonay J.F."/>
            <person name="Nelson W.C."/>
            <person name="Umayam L.A."/>
            <person name="Ermolaeva M.D."/>
            <person name="Salzberg S.L."/>
            <person name="Delcher A."/>
            <person name="Utterback T.R."/>
            <person name="Weidman J.F."/>
            <person name="Khouri H.M."/>
            <person name="Gill J."/>
            <person name="Mikula A."/>
            <person name="Bishai W."/>
            <person name="Jacobs W.R. Jr."/>
            <person name="Venter J.C."/>
            <person name="Fraser C.M."/>
        </authorList>
    </citation>
    <scope>NUCLEOTIDE SEQUENCE [LARGE SCALE GENOMIC DNA]</scope>
    <source>
        <strain>CDC 1551 / Oshkosh</strain>
    </source>
</reference>
<organism>
    <name type="scientific">Mycobacterium tuberculosis (strain CDC 1551 / Oshkosh)</name>
    <dbReference type="NCBI Taxonomy" id="83331"/>
    <lineage>
        <taxon>Bacteria</taxon>
        <taxon>Bacillati</taxon>
        <taxon>Actinomycetota</taxon>
        <taxon>Actinomycetes</taxon>
        <taxon>Mycobacteriales</taxon>
        <taxon>Mycobacteriaceae</taxon>
        <taxon>Mycobacterium</taxon>
        <taxon>Mycobacterium tuberculosis complex</taxon>
    </lineage>
</organism>
<name>MSCL_MYCTO</name>
<accession>P9WJN4</accession>
<accession>L0T5D5</accession>
<accession>O53898</accession>
<accession>P0A5K8</accession>
<evidence type="ECO:0000255" key="1">
    <source>
        <dbReference type="HAMAP-Rule" id="MF_00115"/>
    </source>
</evidence>
<evidence type="ECO:0000256" key="2">
    <source>
        <dbReference type="SAM" id="MobiDB-lite"/>
    </source>
</evidence>
<evidence type="ECO:0000305" key="3"/>
<keyword id="KW-1003">Cell membrane</keyword>
<keyword id="KW-0407">Ion channel</keyword>
<keyword id="KW-0406">Ion transport</keyword>
<keyword id="KW-0472">Membrane</keyword>
<keyword id="KW-1185">Reference proteome</keyword>
<keyword id="KW-0812">Transmembrane</keyword>
<keyword id="KW-1133">Transmembrane helix</keyword>
<keyword id="KW-0813">Transport</keyword>
<gene>
    <name evidence="1" type="primary">mscL</name>
    <name type="ordered locus">MT1013</name>
</gene>
<dbReference type="EMBL" id="AE000516">
    <property type="protein sequence ID" value="AAK45261.1"/>
    <property type="molecule type" value="Genomic_DNA"/>
</dbReference>
<dbReference type="PIR" id="E70821">
    <property type="entry name" value="E70821"/>
</dbReference>
<dbReference type="RefSeq" id="WP_003405128.1">
    <property type="nucleotide sequence ID" value="NZ_KK341227.1"/>
</dbReference>
<dbReference type="SMR" id="P9WJN4"/>
<dbReference type="KEGG" id="mtc:MT1013"/>
<dbReference type="PATRIC" id="fig|83331.31.peg.1087"/>
<dbReference type="HOGENOM" id="CLU_095787_1_1_11"/>
<dbReference type="Proteomes" id="UP000001020">
    <property type="component" value="Chromosome"/>
</dbReference>
<dbReference type="GO" id="GO:0005886">
    <property type="term" value="C:plasma membrane"/>
    <property type="evidence" value="ECO:0007669"/>
    <property type="project" value="UniProtKB-SubCell"/>
</dbReference>
<dbReference type="GO" id="GO:0008381">
    <property type="term" value="F:mechanosensitive monoatomic ion channel activity"/>
    <property type="evidence" value="ECO:0007669"/>
    <property type="project" value="UniProtKB-UniRule"/>
</dbReference>
<dbReference type="FunFam" id="1.10.1200.120:FF:000006">
    <property type="entry name" value="Large-conductance mechanosensitive channel"/>
    <property type="match status" value="1"/>
</dbReference>
<dbReference type="Gene3D" id="1.20.5.220">
    <property type="match status" value="1"/>
</dbReference>
<dbReference type="Gene3D" id="1.10.1200.120">
    <property type="entry name" value="Large-conductance mechanosensitive channel, MscL, domain 1"/>
    <property type="match status" value="1"/>
</dbReference>
<dbReference type="HAMAP" id="MF_00115">
    <property type="entry name" value="MscL"/>
    <property type="match status" value="1"/>
</dbReference>
<dbReference type="InterPro" id="IPR019823">
    <property type="entry name" value="Mechanosensitive_channel_CS"/>
</dbReference>
<dbReference type="InterPro" id="IPR001185">
    <property type="entry name" value="MS_channel"/>
</dbReference>
<dbReference type="InterPro" id="IPR037673">
    <property type="entry name" value="MSC/AndL"/>
</dbReference>
<dbReference type="InterPro" id="IPR036019">
    <property type="entry name" value="MscL_channel"/>
</dbReference>
<dbReference type="NCBIfam" id="TIGR00220">
    <property type="entry name" value="mscL"/>
    <property type="match status" value="1"/>
</dbReference>
<dbReference type="NCBIfam" id="NF001842">
    <property type="entry name" value="PRK00567.1-3"/>
    <property type="match status" value="1"/>
</dbReference>
<dbReference type="PANTHER" id="PTHR30266:SF2">
    <property type="entry name" value="LARGE-CONDUCTANCE MECHANOSENSITIVE CHANNEL"/>
    <property type="match status" value="1"/>
</dbReference>
<dbReference type="PANTHER" id="PTHR30266">
    <property type="entry name" value="MECHANOSENSITIVE CHANNEL MSCL"/>
    <property type="match status" value="1"/>
</dbReference>
<dbReference type="Pfam" id="PF01741">
    <property type="entry name" value="MscL"/>
    <property type="match status" value="1"/>
</dbReference>
<dbReference type="PRINTS" id="PR01264">
    <property type="entry name" value="MECHCHANNEL"/>
</dbReference>
<dbReference type="SUPFAM" id="SSF81330">
    <property type="entry name" value="Gated mechanosensitive channel"/>
    <property type="match status" value="1"/>
</dbReference>
<dbReference type="PROSITE" id="PS01327">
    <property type="entry name" value="MSCL"/>
    <property type="match status" value="1"/>
</dbReference>
<protein>
    <recommendedName>
        <fullName evidence="1">Large-conductance mechanosensitive channel</fullName>
    </recommendedName>
</protein>